<evidence type="ECO:0000250" key="1"/>
<evidence type="ECO:0000255" key="2"/>
<evidence type="ECO:0000256" key="3">
    <source>
        <dbReference type="SAM" id="MobiDB-lite"/>
    </source>
</evidence>
<evidence type="ECO:0000305" key="4"/>
<comment type="function">
    <text evidence="1">The biological conversion of cellulose to glucose generally requires three types of hydrolytic enzymes: (1) Endoglucanases which cut internal beta-1,4-glucosidic bonds; (2) Exocellobiohydrolases that cut the disaccharide cellobiose from the non-reducing end of the cellulose polymer chain; (3) Beta-1,4-glucosidases which hydrolyze the cellobiose and other short cello-oligosaccharides to glucose.</text>
</comment>
<comment type="catalytic activity">
    <reaction>
        <text>Hydrolysis of (1-&gt;4)-beta-D-glucosidic linkages in cellulose and cellotetraose, releasing cellobiose from the non-reducing ends of the chains.</text>
        <dbReference type="EC" id="3.2.1.91"/>
    </reaction>
</comment>
<comment type="subcellular location">
    <subcellularLocation>
        <location evidence="4">Secreted</location>
    </subcellularLocation>
</comment>
<comment type="similarity">
    <text evidence="4">Belongs to the glycosyl hydrolase 7 (cellulase C) family.</text>
</comment>
<name>CBHA_NEOFI</name>
<accession>A1DMA5</accession>
<proteinExistence type="inferred from homology"/>
<reference key="1">
    <citation type="journal article" date="2008" name="PLoS Genet.">
        <title>Genomic islands in the pathogenic filamentous fungus Aspergillus fumigatus.</title>
        <authorList>
            <person name="Fedorova N.D."/>
            <person name="Khaldi N."/>
            <person name="Joardar V.S."/>
            <person name="Maiti R."/>
            <person name="Amedeo P."/>
            <person name="Anderson M.J."/>
            <person name="Crabtree J."/>
            <person name="Silva J.C."/>
            <person name="Badger J.H."/>
            <person name="Albarraq A."/>
            <person name="Angiuoli S."/>
            <person name="Bussey H."/>
            <person name="Bowyer P."/>
            <person name="Cotty P.J."/>
            <person name="Dyer P.S."/>
            <person name="Egan A."/>
            <person name="Galens K."/>
            <person name="Fraser-Liggett C.M."/>
            <person name="Haas B.J."/>
            <person name="Inman J.M."/>
            <person name="Kent R."/>
            <person name="Lemieux S."/>
            <person name="Malavazi I."/>
            <person name="Orvis J."/>
            <person name="Roemer T."/>
            <person name="Ronning C.M."/>
            <person name="Sundaram J.P."/>
            <person name="Sutton G."/>
            <person name="Turner G."/>
            <person name="Venter J.C."/>
            <person name="White O.R."/>
            <person name="Whitty B.R."/>
            <person name="Youngman P."/>
            <person name="Wolfe K.H."/>
            <person name="Goldman G.H."/>
            <person name="Wortman J.R."/>
            <person name="Jiang B."/>
            <person name="Denning D.W."/>
            <person name="Nierman W.C."/>
        </authorList>
    </citation>
    <scope>NUCLEOTIDE SEQUENCE [LARGE SCALE GENOMIC DNA]</scope>
    <source>
        <strain>ATCC 1020 / DSM 3700 / CBS 544.65 / FGSC A1164 / JCM 1740 / NRRL 181 / WB 181</strain>
    </source>
</reference>
<sequence length="452" mass="48193">MHQRALLFSALAVAANAQQVGTQKPETHPPLTWQKCTAAGSCSQQSGSVVIDANWRWLHSTKDTTNCYTGNTWNTELCPDNESCAQNCAVDGADYAGTYGVTTSGSELKLSFVTGANVGSRLYLMQDDETYQHFNLLNNEFTFDVDVSNLPCGLNGALYFVAMDADGGMSKYPSNKAGAKYGTGYCDSQCPRDLKFINGMANVEGWKPSSNDKNAGVGGHGSCCPEMDIWEANSISTAVTPHPCDDVSQTMCSGDACGGTYSATRYAGTCDPDGCDFNPFRMGNESFYGPGKIVDTKSEMTVVTQFITADGTDTGALSEIKRLYVQNGKVIANSVSNVADVSGNSISSDFCTAQKKAFGDEDIFAKHGGLSGMGKALSEMVLIMSIWDDHHSSMMWLDSTYPTDADPSKPGVARGTCEHGAGDPEKVESQHPDASVTFSNIKFGPIGSTYKA</sequence>
<protein>
    <recommendedName>
        <fullName>Probable 1,4-beta-D-glucan cellobiohydrolase A</fullName>
        <ecNumber>3.2.1.91</ecNumber>
    </recommendedName>
    <alternativeName>
        <fullName>Beta-glucancellobiohydrolase A</fullName>
    </alternativeName>
    <alternativeName>
        <fullName>Cellobiohydrolase D</fullName>
    </alternativeName>
    <alternativeName>
        <fullName>Exocellobiohydrolase A</fullName>
    </alternativeName>
    <alternativeName>
        <fullName>Exoglucanase A</fullName>
    </alternativeName>
</protein>
<keyword id="KW-0119">Carbohydrate metabolism</keyword>
<keyword id="KW-0136">Cellulose degradation</keyword>
<keyword id="KW-0325">Glycoprotein</keyword>
<keyword id="KW-0326">Glycosidase</keyword>
<keyword id="KW-0378">Hydrolase</keyword>
<keyword id="KW-0624">Polysaccharide degradation</keyword>
<keyword id="KW-1185">Reference proteome</keyword>
<keyword id="KW-0964">Secreted</keyword>
<keyword id="KW-0732">Signal</keyword>
<gene>
    <name type="primary">cbhA</name>
    <name type="synonym">celD</name>
    <name type="ORF">NFIA_052720</name>
</gene>
<organism>
    <name type="scientific">Neosartorya fischeri (strain ATCC 1020 / DSM 3700 / CBS 544.65 / FGSC A1164 / JCM 1740 / NRRL 181 / WB 181)</name>
    <name type="common">Aspergillus fischerianus</name>
    <dbReference type="NCBI Taxonomy" id="331117"/>
    <lineage>
        <taxon>Eukaryota</taxon>
        <taxon>Fungi</taxon>
        <taxon>Dikarya</taxon>
        <taxon>Ascomycota</taxon>
        <taxon>Pezizomycotina</taxon>
        <taxon>Eurotiomycetes</taxon>
        <taxon>Eurotiomycetidae</taxon>
        <taxon>Eurotiales</taxon>
        <taxon>Aspergillaceae</taxon>
        <taxon>Aspergillus</taxon>
        <taxon>Aspergillus subgen. Fumigati</taxon>
    </lineage>
</organism>
<feature type="signal peptide" evidence="2">
    <location>
        <begin position="1"/>
        <end position="17"/>
    </location>
</feature>
<feature type="chain" id="PRO_0000393545" description="Probable 1,4-beta-D-glucan cellobiohydrolase A">
    <location>
        <begin position="18"/>
        <end position="452"/>
    </location>
</feature>
<feature type="region of interest" description="Disordered" evidence="3">
    <location>
        <begin position="406"/>
        <end position="432"/>
    </location>
</feature>
<feature type="compositionally biased region" description="Basic and acidic residues" evidence="3">
    <location>
        <begin position="416"/>
        <end position="431"/>
    </location>
</feature>
<feature type="active site" description="Nucleophile" evidence="1">
    <location>
        <position position="226"/>
    </location>
</feature>
<feature type="active site" description="Proton donor" evidence="1">
    <location>
        <position position="231"/>
    </location>
</feature>
<feature type="glycosylation site" description="N-linked (GlcNAc...) asparagine" evidence="2">
    <location>
        <position position="81"/>
    </location>
</feature>
<feature type="glycosylation site" description="N-linked (GlcNAc...) asparagine" evidence="2">
    <location>
        <position position="284"/>
    </location>
</feature>
<dbReference type="EC" id="3.2.1.91"/>
<dbReference type="EMBL" id="DS027698">
    <property type="protein sequence ID" value="EAW15926.1"/>
    <property type="molecule type" value="Genomic_DNA"/>
</dbReference>
<dbReference type="RefSeq" id="XP_001257823.1">
    <property type="nucleotide sequence ID" value="XM_001257822.1"/>
</dbReference>
<dbReference type="SMR" id="A1DMA5"/>
<dbReference type="STRING" id="331117.A1DMA5"/>
<dbReference type="GlyCosmos" id="A1DMA5">
    <property type="glycosylation" value="2 sites, No reported glycans"/>
</dbReference>
<dbReference type="EnsemblFungi" id="EAW15926">
    <property type="protein sequence ID" value="EAW15926"/>
    <property type="gene ID" value="NFIA_052720"/>
</dbReference>
<dbReference type="GeneID" id="4584338"/>
<dbReference type="KEGG" id="nfi:NFIA_052720"/>
<dbReference type="VEuPathDB" id="FungiDB:NFIA_052720"/>
<dbReference type="eggNOG" id="ENOG502QPHV">
    <property type="taxonomic scope" value="Eukaryota"/>
</dbReference>
<dbReference type="HOGENOM" id="CLU_020817_3_2_1"/>
<dbReference type="OMA" id="NTYQMFQ"/>
<dbReference type="OrthoDB" id="412382at2759"/>
<dbReference type="Proteomes" id="UP000006702">
    <property type="component" value="Unassembled WGS sequence"/>
</dbReference>
<dbReference type="GO" id="GO:0005576">
    <property type="term" value="C:extracellular region"/>
    <property type="evidence" value="ECO:0007669"/>
    <property type="project" value="UniProtKB-SubCell"/>
</dbReference>
<dbReference type="GO" id="GO:0016162">
    <property type="term" value="F:cellulose 1,4-beta-cellobiosidase activity"/>
    <property type="evidence" value="ECO:0007669"/>
    <property type="project" value="UniProtKB-EC"/>
</dbReference>
<dbReference type="GO" id="GO:0030245">
    <property type="term" value="P:cellulose catabolic process"/>
    <property type="evidence" value="ECO:0007669"/>
    <property type="project" value="UniProtKB-KW"/>
</dbReference>
<dbReference type="CDD" id="cd07999">
    <property type="entry name" value="GH7_CBH_EG"/>
    <property type="match status" value="1"/>
</dbReference>
<dbReference type="FunFam" id="2.70.100.10:FF:000001">
    <property type="entry name" value="Glucanase"/>
    <property type="match status" value="1"/>
</dbReference>
<dbReference type="Gene3D" id="2.70.100.10">
    <property type="entry name" value="Glycoside hydrolase, family 7, domain"/>
    <property type="match status" value="1"/>
</dbReference>
<dbReference type="InterPro" id="IPR013320">
    <property type="entry name" value="ConA-like_dom_sf"/>
</dbReference>
<dbReference type="InterPro" id="IPR001722">
    <property type="entry name" value="Glyco_hydro_7"/>
</dbReference>
<dbReference type="InterPro" id="IPR037019">
    <property type="entry name" value="Glyco_hydro_7_sf"/>
</dbReference>
<dbReference type="PANTHER" id="PTHR33753:SF6">
    <property type="entry name" value="1,4-BETA-D-GLUCAN CELLOBIOHYDROLASE A-RELATED"/>
    <property type="match status" value="1"/>
</dbReference>
<dbReference type="PANTHER" id="PTHR33753">
    <property type="entry name" value="1,4-BETA-D-GLUCAN CELLOBIOHYDROLASE B"/>
    <property type="match status" value="1"/>
</dbReference>
<dbReference type="Pfam" id="PF00840">
    <property type="entry name" value="Glyco_hydro_7"/>
    <property type="match status" value="1"/>
</dbReference>
<dbReference type="PRINTS" id="PR00734">
    <property type="entry name" value="GLHYDRLASE7"/>
</dbReference>
<dbReference type="SUPFAM" id="SSF49899">
    <property type="entry name" value="Concanavalin A-like lectins/glucanases"/>
    <property type="match status" value="1"/>
</dbReference>